<reference key="1">
    <citation type="submission" date="2002-06" db="EMBL/GenBank/DDBJ databases">
        <title>Gj536 Griffithsia japonica photosystem II 12 kDa extrinsic protein gene.</title>
        <authorList>
            <person name="Liu C.L."/>
            <person name="Lee Y.K."/>
            <person name="Lee H.K."/>
        </authorList>
    </citation>
    <scope>NUCLEOTIDE SEQUENCE [MRNA]</scope>
    <source>
        <strain>Gj536</strain>
    </source>
</reference>
<comment type="function">
    <text evidence="1">One of the extrinsic, lumenal subunits of photosystem II (PSII). PSII is a light-driven water plastoquinone oxidoreductase, using light energy to abstract electrons from H(2)O, generating a proton gradient subsequently used for ATP formation. The extrinsic proteins stabilize the structure of photosystem II oxygen-evolving complex (OEC), the ion environment of oxygen evolution and protect the OEC against heat-induced inactivation.</text>
</comment>
<comment type="subunit">
    <text evidence="1">PSII is composed of 1 copy each of membrane proteins PsbA, PsbB, PsbC, PsbD, PsbE, PsbF, PsbH, PsbI, PsbJ, PsbK, PsbL, PsbM, PsbT, PsbX, PsbY, PsbZ, Psb30/Ycf12, at least 3 peripheral proteins of the oxygen-evolving complex and a large number of cofactors. It forms dimeric complexes. The oxyThe extrinsic subunits in red algae are PsbO (OEC33), PsbQ', cytochrome c-550 and PsbU.</text>
</comment>
<comment type="subcellular location">
    <subcellularLocation>
        <location evidence="1">Plastid</location>
        <location evidence="1">Chloroplast thylakoid membrane</location>
        <topology evidence="1">Peripheral membrane protein</topology>
        <orientation evidence="1">Lumenal side</orientation>
    </subcellularLocation>
</comment>
<comment type="PTM">
    <text evidence="3">Predicted to be translocated into the thylakoid lumen by the Tat system. The position of the transit peptide cleavages have not been experimentally proven.</text>
</comment>
<comment type="similarity">
    <text evidence="3">Belongs to the PsbU family.</text>
</comment>
<evidence type="ECO:0000250" key="1">
    <source>
        <dbReference type="UniProtKB" id="Q9ZQS5"/>
    </source>
</evidence>
<evidence type="ECO:0000255" key="2"/>
<evidence type="ECO:0000305" key="3"/>
<evidence type="ECO:0000305" key="4">
    <source ref="1"/>
</evidence>
<sequence>MAFISGPALPTARVNRTVAATPVRMASGEDTPVVSRRALLSSTLAAAAAALLSAAAPAKADREYGNVGFLGGGDKIDVNNANVRVYGRLPGMYPTLAGLIVANGPYKSVGDLYNIPGLDDKQTGLLKKYEDSFVALEPRPEYEIDKFNNGLYR</sequence>
<organism>
    <name type="scientific">Griffithsia japonica</name>
    <name type="common">Red alga</name>
    <dbReference type="NCBI Taxonomy" id="83288"/>
    <lineage>
        <taxon>Eukaryota</taxon>
        <taxon>Rhodophyta</taxon>
        <taxon>Florideophyceae</taxon>
        <taxon>Rhodymeniophycidae</taxon>
        <taxon>Ceramiales</taxon>
        <taxon>Ceramiaceae</taxon>
        <taxon>Griffithsia</taxon>
    </lineage>
</organism>
<accession>Q7XY82</accession>
<feature type="transit peptide" description="Chloroplast" evidence="2">
    <location>
        <begin position="1"/>
        <end status="unknown"/>
    </location>
</feature>
<feature type="transit peptide" description="Thylakoid" evidence="2">
    <location>
        <begin status="unknown"/>
        <end position="60"/>
    </location>
</feature>
<feature type="chain" id="PRO_0000295790" description="Photosystem II extrinsic protein U, chloroplastic">
    <location>
        <begin position="61"/>
        <end position="153"/>
    </location>
</feature>
<keyword id="KW-0150">Chloroplast</keyword>
<keyword id="KW-0249">Electron transport</keyword>
<keyword id="KW-0472">Membrane</keyword>
<keyword id="KW-0602">Photosynthesis</keyword>
<keyword id="KW-0604">Photosystem II</keyword>
<keyword id="KW-0934">Plastid</keyword>
<keyword id="KW-0793">Thylakoid</keyword>
<keyword id="KW-0809">Transit peptide</keyword>
<keyword id="KW-0813">Transport</keyword>
<name>PSBU_GRIJA</name>
<protein>
    <recommendedName>
        <fullName evidence="3">Photosystem II extrinsic protein U, chloroplastic</fullName>
        <shortName evidence="3">PsbU</shortName>
    </recommendedName>
    <alternativeName>
        <fullName evidence="4">Photosystem II 12 kDa extrinsic protein</fullName>
        <shortName>PS II complex 12 kDa extrinsic protein</shortName>
    </alternativeName>
</protein>
<gene>
    <name type="primary">psbU</name>
</gene>
<dbReference type="EMBL" id="AF517880">
    <property type="protein sequence ID" value="AAP80721.1"/>
    <property type="molecule type" value="mRNA"/>
</dbReference>
<dbReference type="SMR" id="Q7XY82"/>
<dbReference type="GO" id="GO:0009535">
    <property type="term" value="C:chloroplast thylakoid membrane"/>
    <property type="evidence" value="ECO:0007669"/>
    <property type="project" value="UniProtKB-SubCell"/>
</dbReference>
<dbReference type="GO" id="GO:0019898">
    <property type="term" value="C:extrinsic component of membrane"/>
    <property type="evidence" value="ECO:0007669"/>
    <property type="project" value="InterPro"/>
</dbReference>
<dbReference type="GO" id="GO:0009523">
    <property type="term" value="C:photosystem II"/>
    <property type="evidence" value="ECO:0007669"/>
    <property type="project" value="UniProtKB-KW"/>
</dbReference>
<dbReference type="GO" id="GO:0015979">
    <property type="term" value="P:photosynthesis"/>
    <property type="evidence" value="ECO:0007669"/>
    <property type="project" value="UniProtKB-KW"/>
</dbReference>
<dbReference type="GO" id="GO:0042549">
    <property type="term" value="P:photosystem II stabilization"/>
    <property type="evidence" value="ECO:0007669"/>
    <property type="project" value="InterPro"/>
</dbReference>
<dbReference type="Gene3D" id="1.10.150.320">
    <property type="entry name" value="Photosystem II 12 kDa extrinsic protein"/>
    <property type="match status" value="1"/>
</dbReference>
<dbReference type="InterPro" id="IPR010527">
    <property type="entry name" value="PSII_PsbU"/>
</dbReference>
<dbReference type="InterPro" id="IPR006311">
    <property type="entry name" value="TAT_signal"/>
</dbReference>
<dbReference type="NCBIfam" id="NF002708">
    <property type="entry name" value="PRK02515.1"/>
    <property type="match status" value="1"/>
</dbReference>
<dbReference type="Pfam" id="PF06514">
    <property type="entry name" value="PsbU"/>
    <property type="match status" value="1"/>
</dbReference>
<dbReference type="SUPFAM" id="SSF81585">
    <property type="entry name" value="PsbU/PolX domain-like"/>
    <property type="match status" value="1"/>
</dbReference>
<dbReference type="PROSITE" id="PS51318">
    <property type="entry name" value="TAT"/>
    <property type="match status" value="1"/>
</dbReference>
<proteinExistence type="evidence at transcript level"/>